<accession>Q3KFT0</accession>
<dbReference type="EC" id="6.3.3.1" evidence="1"/>
<dbReference type="EMBL" id="CP000094">
    <property type="protein sequence ID" value="ABA73376.1"/>
    <property type="molecule type" value="Genomic_DNA"/>
</dbReference>
<dbReference type="RefSeq" id="WP_011333132.1">
    <property type="nucleotide sequence ID" value="NC_007492.2"/>
</dbReference>
<dbReference type="SMR" id="Q3KFT0"/>
<dbReference type="KEGG" id="pfo:Pfl01_1633"/>
<dbReference type="eggNOG" id="COG0150">
    <property type="taxonomic scope" value="Bacteria"/>
</dbReference>
<dbReference type="HOGENOM" id="CLU_047116_0_0_6"/>
<dbReference type="UniPathway" id="UPA00074">
    <property type="reaction ID" value="UER00129"/>
</dbReference>
<dbReference type="Proteomes" id="UP000002704">
    <property type="component" value="Chromosome"/>
</dbReference>
<dbReference type="GO" id="GO:0005829">
    <property type="term" value="C:cytosol"/>
    <property type="evidence" value="ECO:0007669"/>
    <property type="project" value="TreeGrafter"/>
</dbReference>
<dbReference type="GO" id="GO:0005524">
    <property type="term" value="F:ATP binding"/>
    <property type="evidence" value="ECO:0007669"/>
    <property type="project" value="UniProtKB-KW"/>
</dbReference>
<dbReference type="GO" id="GO:0004637">
    <property type="term" value="F:phosphoribosylamine-glycine ligase activity"/>
    <property type="evidence" value="ECO:0007669"/>
    <property type="project" value="TreeGrafter"/>
</dbReference>
<dbReference type="GO" id="GO:0004641">
    <property type="term" value="F:phosphoribosylformylglycinamidine cyclo-ligase activity"/>
    <property type="evidence" value="ECO:0007669"/>
    <property type="project" value="UniProtKB-UniRule"/>
</dbReference>
<dbReference type="GO" id="GO:0006189">
    <property type="term" value="P:'de novo' IMP biosynthetic process"/>
    <property type="evidence" value="ECO:0007669"/>
    <property type="project" value="UniProtKB-UniRule"/>
</dbReference>
<dbReference type="GO" id="GO:0046084">
    <property type="term" value="P:adenine biosynthetic process"/>
    <property type="evidence" value="ECO:0007669"/>
    <property type="project" value="TreeGrafter"/>
</dbReference>
<dbReference type="CDD" id="cd02196">
    <property type="entry name" value="PurM"/>
    <property type="match status" value="1"/>
</dbReference>
<dbReference type="FunFam" id="3.30.1330.10:FF:000001">
    <property type="entry name" value="Phosphoribosylformylglycinamidine cyclo-ligase"/>
    <property type="match status" value="1"/>
</dbReference>
<dbReference type="FunFam" id="3.90.650.10:FF:000001">
    <property type="entry name" value="Phosphoribosylformylglycinamidine cyclo-ligase"/>
    <property type="match status" value="1"/>
</dbReference>
<dbReference type="Gene3D" id="3.90.650.10">
    <property type="entry name" value="PurM-like C-terminal domain"/>
    <property type="match status" value="1"/>
</dbReference>
<dbReference type="Gene3D" id="3.30.1330.10">
    <property type="entry name" value="PurM-like, N-terminal domain"/>
    <property type="match status" value="1"/>
</dbReference>
<dbReference type="HAMAP" id="MF_00741">
    <property type="entry name" value="AIRS"/>
    <property type="match status" value="1"/>
</dbReference>
<dbReference type="InterPro" id="IPR010918">
    <property type="entry name" value="PurM-like_C_dom"/>
</dbReference>
<dbReference type="InterPro" id="IPR036676">
    <property type="entry name" value="PurM-like_C_sf"/>
</dbReference>
<dbReference type="InterPro" id="IPR016188">
    <property type="entry name" value="PurM-like_N"/>
</dbReference>
<dbReference type="InterPro" id="IPR036921">
    <property type="entry name" value="PurM-like_N_sf"/>
</dbReference>
<dbReference type="InterPro" id="IPR004733">
    <property type="entry name" value="PurM_cligase"/>
</dbReference>
<dbReference type="NCBIfam" id="TIGR00878">
    <property type="entry name" value="purM"/>
    <property type="match status" value="1"/>
</dbReference>
<dbReference type="PANTHER" id="PTHR10520:SF12">
    <property type="entry name" value="TRIFUNCTIONAL PURINE BIOSYNTHETIC PROTEIN ADENOSINE-3"/>
    <property type="match status" value="1"/>
</dbReference>
<dbReference type="PANTHER" id="PTHR10520">
    <property type="entry name" value="TRIFUNCTIONAL PURINE BIOSYNTHETIC PROTEIN ADENOSINE-3-RELATED"/>
    <property type="match status" value="1"/>
</dbReference>
<dbReference type="Pfam" id="PF00586">
    <property type="entry name" value="AIRS"/>
    <property type="match status" value="1"/>
</dbReference>
<dbReference type="Pfam" id="PF02769">
    <property type="entry name" value="AIRS_C"/>
    <property type="match status" value="1"/>
</dbReference>
<dbReference type="SUPFAM" id="SSF56042">
    <property type="entry name" value="PurM C-terminal domain-like"/>
    <property type="match status" value="1"/>
</dbReference>
<dbReference type="SUPFAM" id="SSF55326">
    <property type="entry name" value="PurM N-terminal domain-like"/>
    <property type="match status" value="1"/>
</dbReference>
<name>PUR5_PSEPF</name>
<sequence>MSKQPSLSYKDAGVDIDAGEALVERIKSVAKRTARPEVMGGLGGFGALCEIPAGYKQPVLVSGTDGVGTKLRLALNLNKHDSIGQDLVAMCVNDLVVCGAEPLFFLDYYATGKLNVDVAATVVTGIGAGCELAGCSLVGGETAEMPGMYEGEDYDLAGFCVGVVEKAEIIDGSKVATGDALIALPSSGPHSNGYSLIRKIIEVSGADIETVQLDGKPLTELLMAPTRIYVKPLLKLIKDTGAVKAMAHITGGGLLDNIPRVLPKGAQAVVDVASWNRPAVFDWLQEKGNVDETEMHRVLNCGVGMVICVAQEHVEVALNTLRDAGEQPWVIGQIAAAAEGAAQVELKNLKAH</sequence>
<organism>
    <name type="scientific">Pseudomonas fluorescens (strain Pf0-1)</name>
    <dbReference type="NCBI Taxonomy" id="205922"/>
    <lineage>
        <taxon>Bacteria</taxon>
        <taxon>Pseudomonadati</taxon>
        <taxon>Pseudomonadota</taxon>
        <taxon>Gammaproteobacteria</taxon>
        <taxon>Pseudomonadales</taxon>
        <taxon>Pseudomonadaceae</taxon>
        <taxon>Pseudomonas</taxon>
    </lineage>
</organism>
<gene>
    <name evidence="1" type="primary">purM</name>
    <name type="ordered locus">Pfl01_1633</name>
</gene>
<protein>
    <recommendedName>
        <fullName evidence="1">Phosphoribosylformylglycinamidine cyclo-ligase</fullName>
        <ecNumber evidence="1">6.3.3.1</ecNumber>
    </recommendedName>
    <alternativeName>
        <fullName evidence="1">AIR synthase</fullName>
    </alternativeName>
    <alternativeName>
        <fullName evidence="1">AIRS</fullName>
    </alternativeName>
    <alternativeName>
        <fullName evidence="1">Phosphoribosyl-aminoimidazole synthetase</fullName>
    </alternativeName>
</protein>
<feature type="chain" id="PRO_0000258384" description="Phosphoribosylformylglycinamidine cyclo-ligase">
    <location>
        <begin position="1"/>
        <end position="352"/>
    </location>
</feature>
<keyword id="KW-0067">ATP-binding</keyword>
<keyword id="KW-0963">Cytoplasm</keyword>
<keyword id="KW-0436">Ligase</keyword>
<keyword id="KW-0547">Nucleotide-binding</keyword>
<keyword id="KW-0658">Purine biosynthesis</keyword>
<comment type="catalytic activity">
    <reaction evidence="1">
        <text>2-formamido-N(1)-(5-O-phospho-beta-D-ribosyl)acetamidine + ATP = 5-amino-1-(5-phospho-beta-D-ribosyl)imidazole + ADP + phosphate + H(+)</text>
        <dbReference type="Rhea" id="RHEA:23032"/>
        <dbReference type="ChEBI" id="CHEBI:15378"/>
        <dbReference type="ChEBI" id="CHEBI:30616"/>
        <dbReference type="ChEBI" id="CHEBI:43474"/>
        <dbReference type="ChEBI" id="CHEBI:137981"/>
        <dbReference type="ChEBI" id="CHEBI:147287"/>
        <dbReference type="ChEBI" id="CHEBI:456216"/>
        <dbReference type="EC" id="6.3.3.1"/>
    </reaction>
</comment>
<comment type="pathway">
    <text evidence="1">Purine metabolism; IMP biosynthesis via de novo pathway; 5-amino-1-(5-phospho-D-ribosyl)imidazole from N(2)-formyl-N(1)-(5-phospho-D-ribosyl)glycinamide: step 2/2.</text>
</comment>
<comment type="subcellular location">
    <subcellularLocation>
        <location evidence="1">Cytoplasm</location>
    </subcellularLocation>
</comment>
<comment type="similarity">
    <text evidence="1">Belongs to the AIR synthase family.</text>
</comment>
<reference key="1">
    <citation type="journal article" date="2009" name="Genome Biol.">
        <title>Genomic and genetic analyses of diversity and plant interactions of Pseudomonas fluorescens.</title>
        <authorList>
            <person name="Silby M.W."/>
            <person name="Cerdeno-Tarraga A.M."/>
            <person name="Vernikos G.S."/>
            <person name="Giddens S.R."/>
            <person name="Jackson R.W."/>
            <person name="Preston G.M."/>
            <person name="Zhang X.-X."/>
            <person name="Moon C.D."/>
            <person name="Gehrig S.M."/>
            <person name="Godfrey S.A.C."/>
            <person name="Knight C.G."/>
            <person name="Malone J.G."/>
            <person name="Robinson Z."/>
            <person name="Spiers A.J."/>
            <person name="Harris S."/>
            <person name="Challis G.L."/>
            <person name="Yaxley A.M."/>
            <person name="Harris D."/>
            <person name="Seeger K."/>
            <person name="Murphy L."/>
            <person name="Rutter S."/>
            <person name="Squares R."/>
            <person name="Quail M.A."/>
            <person name="Saunders E."/>
            <person name="Mavromatis K."/>
            <person name="Brettin T.S."/>
            <person name="Bentley S.D."/>
            <person name="Hothersall J."/>
            <person name="Stephens E."/>
            <person name="Thomas C.M."/>
            <person name="Parkhill J."/>
            <person name="Levy S.B."/>
            <person name="Rainey P.B."/>
            <person name="Thomson N.R."/>
        </authorList>
    </citation>
    <scope>NUCLEOTIDE SEQUENCE [LARGE SCALE GENOMIC DNA]</scope>
    <source>
        <strain>Pf0-1</strain>
    </source>
</reference>
<evidence type="ECO:0000255" key="1">
    <source>
        <dbReference type="HAMAP-Rule" id="MF_00741"/>
    </source>
</evidence>
<proteinExistence type="inferred from homology"/>